<feature type="chain" id="PRO_0000445879" description="Very-long-chain aldehyde decarbonylase GL1-7">
    <location>
        <begin position="1"/>
        <end position="630"/>
    </location>
</feature>
<feature type="transmembrane region" description="Helical" evidence="2">
    <location>
        <begin position="93"/>
        <end position="113"/>
    </location>
</feature>
<feature type="transmembrane region" description="Helical" evidence="2">
    <location>
        <begin position="126"/>
        <end position="146"/>
    </location>
</feature>
<feature type="transmembrane region" description="Helical" evidence="2">
    <location>
        <begin position="185"/>
        <end position="205"/>
    </location>
</feature>
<feature type="transmembrane region" description="Helical" evidence="2">
    <location>
        <begin position="325"/>
        <end position="345"/>
    </location>
</feature>
<feature type="domain" description="Fatty acid hydroxylase" evidence="2">
    <location>
        <begin position="133"/>
        <end position="272"/>
    </location>
</feature>
<evidence type="ECO:0000250" key="1">
    <source>
        <dbReference type="UniProtKB" id="F4HVY0"/>
    </source>
</evidence>
<evidence type="ECO:0000255" key="2"/>
<evidence type="ECO:0000269" key="3">
    <source>
    </source>
</evidence>
<evidence type="ECO:0000303" key="4">
    <source>
    </source>
</evidence>
<evidence type="ECO:0000305" key="5"/>
<evidence type="ECO:0000312" key="6">
    <source>
        <dbReference type="EMBL" id="CAE03390.2"/>
    </source>
</evidence>
<dbReference type="EC" id="4.1.99.5" evidence="1"/>
<dbReference type="EMBL" id="AL606622">
    <property type="protein sequence ID" value="CAE03390.2"/>
    <property type="status" value="ALT_SEQ"/>
    <property type="molecule type" value="Genomic_DNA"/>
</dbReference>
<dbReference type="EMBL" id="AP014960">
    <property type="status" value="NOT_ANNOTATED_CDS"/>
    <property type="molecule type" value="Genomic_DNA"/>
</dbReference>
<dbReference type="STRING" id="39947.Q7XPZ4"/>
<dbReference type="PaxDb" id="39947-Q7XPZ4"/>
<dbReference type="InParanoid" id="Q7XPZ4"/>
<dbReference type="Proteomes" id="UP000000763">
    <property type="component" value="Chromosome 4"/>
</dbReference>
<dbReference type="Proteomes" id="UP000059680">
    <property type="component" value="Chromosome 4"/>
</dbReference>
<dbReference type="GO" id="GO:0005789">
    <property type="term" value="C:endoplasmic reticulum membrane"/>
    <property type="evidence" value="ECO:0007669"/>
    <property type="project" value="UniProtKB-SubCell"/>
</dbReference>
<dbReference type="GO" id="GO:0071771">
    <property type="term" value="F:aldehyde oxygenase (deformylating) activity"/>
    <property type="evidence" value="ECO:0007669"/>
    <property type="project" value="UniProtKB-EC"/>
</dbReference>
<dbReference type="GO" id="GO:0005506">
    <property type="term" value="F:iron ion binding"/>
    <property type="evidence" value="ECO:0007669"/>
    <property type="project" value="InterPro"/>
</dbReference>
<dbReference type="GO" id="GO:0016491">
    <property type="term" value="F:oxidoreductase activity"/>
    <property type="evidence" value="ECO:0007669"/>
    <property type="project" value="InterPro"/>
</dbReference>
<dbReference type="GO" id="GO:0008610">
    <property type="term" value="P:lipid biosynthetic process"/>
    <property type="evidence" value="ECO:0007669"/>
    <property type="project" value="InterPro"/>
</dbReference>
<dbReference type="GO" id="GO:0006950">
    <property type="term" value="P:response to stress"/>
    <property type="evidence" value="ECO:0007669"/>
    <property type="project" value="UniProtKB-ARBA"/>
</dbReference>
<dbReference type="InterPro" id="IPR021940">
    <property type="entry name" value="CER1-like_C"/>
</dbReference>
<dbReference type="InterPro" id="IPR006694">
    <property type="entry name" value="Fatty_acid_hydroxylase"/>
</dbReference>
<dbReference type="InterPro" id="IPR050307">
    <property type="entry name" value="Sterol_Desaturase_Related"/>
</dbReference>
<dbReference type="PANTHER" id="PTHR11863">
    <property type="entry name" value="STEROL DESATURASE"/>
    <property type="match status" value="1"/>
</dbReference>
<dbReference type="Pfam" id="PF12076">
    <property type="entry name" value="CER1-like_C"/>
    <property type="match status" value="1"/>
</dbReference>
<dbReference type="Pfam" id="PF04116">
    <property type="entry name" value="FA_hydroxylase"/>
    <property type="match status" value="1"/>
</dbReference>
<comment type="function">
    <text evidence="1">Aldehyde decarbonylase involved in the conversion of aldehydes to alkanes. Core component of a very-long-chain alkane synthesis complex.</text>
</comment>
<comment type="catalytic activity">
    <reaction evidence="1">
        <text>a long-chain fatty aldehyde + 2 NADPH + O2 + H(+) = a long-chain alkane + formate + 2 NADP(+) + H2O</text>
        <dbReference type="Rhea" id="RHEA:21440"/>
        <dbReference type="ChEBI" id="CHEBI:15377"/>
        <dbReference type="ChEBI" id="CHEBI:15378"/>
        <dbReference type="ChEBI" id="CHEBI:15379"/>
        <dbReference type="ChEBI" id="CHEBI:15740"/>
        <dbReference type="ChEBI" id="CHEBI:17176"/>
        <dbReference type="ChEBI" id="CHEBI:57783"/>
        <dbReference type="ChEBI" id="CHEBI:58349"/>
        <dbReference type="ChEBI" id="CHEBI:83563"/>
        <dbReference type="EC" id="4.1.99.5"/>
    </reaction>
</comment>
<comment type="subunit">
    <text evidence="1">Homodimer.</text>
</comment>
<comment type="subcellular location">
    <subcellularLocation>
        <location evidence="1">Endoplasmic reticulum membrane</location>
        <topology evidence="1">Multi-pass membrane protein</topology>
    </subcellularLocation>
</comment>
<comment type="tissue specificity">
    <text evidence="3">Expressed in panicles at low levels.</text>
</comment>
<comment type="similarity">
    <text evidence="5">Belongs to the sterol desaturase family.</text>
</comment>
<comment type="sequence caution" evidence="5">
    <conflict type="erroneous gene model prediction">
        <sequence resource="EMBL-CDS" id="CAE03390"/>
    </conflict>
</comment>
<accession>Q7XPZ4</accession>
<gene>
    <name evidence="4" type="primary">GL1-7</name>
    <name evidence="5" type="ordered locus">LOC_Os04g43270</name>
    <name evidence="5" type="ordered locus">Os04g0512200</name>
    <name evidence="6" type="ORF">OSJNBa0004N05.14</name>
</gene>
<name>GLO17_ORYSJ</name>
<sequence length="630" mass="72394">MATRPGPLTEWPWQWMGGYKYLVLAPVAMHTAHRLATKGWGDFDPAYTFMLPTLLLRMIHNQIWISLSRYQTARRKHLIVDRSLDFEQVDRVLYLDDQIILNGLLFYLGYAIIPNFRLMPVWRTNGALITILLHMGPVEFLYYWFHRALHHHFLYSRYHSHHHASIVTEPITSVIHPFAEHLAYFLLFSISILPPIFMGCGSVLAGVLYITYIDFMNNMGHCNFELMPKWMFQTFPPLKYLIYTPSFHSLHHTQFRTNYSLFMPFYDYIYNTMDSSSDELYERSLKGTEETPDIVHLTHMTSLKSTYHLRIGITSISSKPCNDSVWYMWMLWPVAWLSMVLAWIYGSSAFVVERLKLKKFSMQVWALPRYNFQVMDSSALGKVSPSTILIEKAILDANEKGVKVLSLGLLNQAEQLNGSGELFAKKYPRLRVRLIDGSGLATAVVLNSIPFGTKQVFLCGSNSKVTRATAIALCQRGVQVILNQEKEYGMLKSRVPESRAIYLKFSNDETPQIWIGDSIDDAQGRAPKGTIFIPTSQFPLKKARKDCTYLSNPAMKIPETMQNVHTCENWLPRRVMSAWRIAGILHALEGWEMHECGDDMMTIEKTWSAAIKHGFKPLTKPCSLNSGTDL</sequence>
<reference key="1">
    <citation type="journal article" date="2002" name="Nature">
        <title>Sequence and analysis of rice chromosome 4.</title>
        <authorList>
            <person name="Feng Q."/>
            <person name="Zhang Y."/>
            <person name="Hao P."/>
            <person name="Wang S."/>
            <person name="Fu G."/>
            <person name="Huang Y."/>
            <person name="Li Y."/>
            <person name="Zhu J."/>
            <person name="Liu Y."/>
            <person name="Hu X."/>
            <person name="Jia P."/>
            <person name="Zhang Y."/>
            <person name="Zhao Q."/>
            <person name="Ying K."/>
            <person name="Yu S."/>
            <person name="Tang Y."/>
            <person name="Weng Q."/>
            <person name="Zhang L."/>
            <person name="Lu Y."/>
            <person name="Mu J."/>
            <person name="Lu Y."/>
            <person name="Zhang L.S."/>
            <person name="Yu Z."/>
            <person name="Fan D."/>
            <person name="Liu X."/>
            <person name="Lu T."/>
            <person name="Li C."/>
            <person name="Wu Y."/>
            <person name="Sun T."/>
            <person name="Lei H."/>
            <person name="Li T."/>
            <person name="Hu H."/>
            <person name="Guan J."/>
            <person name="Wu M."/>
            <person name="Zhang R."/>
            <person name="Zhou B."/>
            <person name="Chen Z."/>
            <person name="Chen L."/>
            <person name="Jin Z."/>
            <person name="Wang R."/>
            <person name="Yin H."/>
            <person name="Cai Z."/>
            <person name="Ren S."/>
            <person name="Lv G."/>
            <person name="Gu W."/>
            <person name="Zhu G."/>
            <person name="Tu Y."/>
            <person name="Jia J."/>
            <person name="Zhang Y."/>
            <person name="Chen J."/>
            <person name="Kang H."/>
            <person name="Chen X."/>
            <person name="Shao C."/>
            <person name="Sun Y."/>
            <person name="Hu Q."/>
            <person name="Zhang X."/>
            <person name="Zhang W."/>
            <person name="Wang L."/>
            <person name="Ding C."/>
            <person name="Sheng H."/>
            <person name="Gu J."/>
            <person name="Chen S."/>
            <person name="Ni L."/>
            <person name="Zhu F."/>
            <person name="Chen W."/>
            <person name="Lan L."/>
            <person name="Lai Y."/>
            <person name="Cheng Z."/>
            <person name="Gu M."/>
            <person name="Jiang J."/>
            <person name="Li J."/>
            <person name="Hong G."/>
            <person name="Xue Y."/>
            <person name="Han B."/>
        </authorList>
    </citation>
    <scope>NUCLEOTIDE SEQUENCE [LARGE SCALE GENOMIC DNA]</scope>
    <source>
        <strain>cv. Nipponbare</strain>
    </source>
</reference>
<reference key="2">
    <citation type="journal article" date="2005" name="Nature">
        <title>The map-based sequence of the rice genome.</title>
        <authorList>
            <consortium name="International rice genome sequencing project (IRGSP)"/>
        </authorList>
    </citation>
    <scope>NUCLEOTIDE SEQUENCE [LARGE SCALE GENOMIC DNA]</scope>
    <source>
        <strain>cv. Nipponbare</strain>
    </source>
</reference>
<reference key="3">
    <citation type="journal article" date="2008" name="Nucleic Acids Res.">
        <title>The rice annotation project database (RAP-DB): 2008 update.</title>
        <authorList>
            <consortium name="The rice annotation project (RAP)"/>
        </authorList>
    </citation>
    <scope>GENOME REANNOTATION</scope>
    <source>
        <strain>cv. Nipponbare</strain>
    </source>
</reference>
<reference key="4">
    <citation type="journal article" date="2013" name="Rice">
        <title>Improvement of the Oryza sativa Nipponbare reference genome using next generation sequence and optical map data.</title>
        <authorList>
            <person name="Kawahara Y."/>
            <person name="de la Bastide M."/>
            <person name="Hamilton J.P."/>
            <person name="Kanamori H."/>
            <person name="McCombie W.R."/>
            <person name="Ouyang S."/>
            <person name="Schwartz D.C."/>
            <person name="Tanaka T."/>
            <person name="Wu J."/>
            <person name="Zhou S."/>
            <person name="Childs K.L."/>
            <person name="Davidson R.M."/>
            <person name="Lin H."/>
            <person name="Quesada-Ocampo L."/>
            <person name="Vaillancourt B."/>
            <person name="Sakai H."/>
            <person name="Lee S.S."/>
            <person name="Kim J."/>
            <person name="Numa H."/>
            <person name="Itoh T."/>
            <person name="Buell C.R."/>
            <person name="Matsumoto T."/>
        </authorList>
    </citation>
    <scope>GENOME REANNOTATION</scope>
    <source>
        <strain>cv. Nipponbare</strain>
    </source>
</reference>
<reference key="5">
    <citation type="journal article" date="2009" name="Plant Mol. Biol.">
        <title>Characterization of Glossy1-homologous genes in rice involved in leaf wax accumulation and drought resistance.</title>
        <authorList>
            <person name="Islam M.A."/>
            <person name="Du H."/>
            <person name="Ning J."/>
            <person name="Ye H."/>
            <person name="Xiong L."/>
        </authorList>
    </citation>
    <scope>TISSUE SPECIFICITY</scope>
    <scope>GENE FAMILY</scope>
    <scope>NOMENCLATURE</scope>
</reference>
<organism>
    <name type="scientific">Oryza sativa subsp. japonica</name>
    <name type="common">Rice</name>
    <dbReference type="NCBI Taxonomy" id="39947"/>
    <lineage>
        <taxon>Eukaryota</taxon>
        <taxon>Viridiplantae</taxon>
        <taxon>Streptophyta</taxon>
        <taxon>Embryophyta</taxon>
        <taxon>Tracheophyta</taxon>
        <taxon>Spermatophyta</taxon>
        <taxon>Magnoliopsida</taxon>
        <taxon>Liliopsida</taxon>
        <taxon>Poales</taxon>
        <taxon>Poaceae</taxon>
        <taxon>BOP clade</taxon>
        <taxon>Oryzoideae</taxon>
        <taxon>Oryzeae</taxon>
        <taxon>Oryzinae</taxon>
        <taxon>Oryza</taxon>
        <taxon>Oryza sativa</taxon>
    </lineage>
</organism>
<protein>
    <recommendedName>
        <fullName evidence="5">Very-long-chain aldehyde decarbonylase GL1-7</fullName>
        <ecNumber evidence="1">4.1.99.5</ecNumber>
    </recommendedName>
    <alternativeName>
        <fullName evidence="4">Protein GLOSSY 1-7</fullName>
    </alternativeName>
</protein>
<proteinExistence type="evidence at transcript level"/>
<keyword id="KW-0256">Endoplasmic reticulum</keyword>
<keyword id="KW-0456">Lyase</keyword>
<keyword id="KW-0472">Membrane</keyword>
<keyword id="KW-0521">NADP</keyword>
<keyword id="KW-1185">Reference proteome</keyword>
<keyword id="KW-0812">Transmembrane</keyword>
<keyword id="KW-1133">Transmembrane helix</keyword>